<dbReference type="EMBL" id="L77117">
    <property type="protein sequence ID" value="AAB98937.1"/>
    <property type="molecule type" value="Genomic_DNA"/>
</dbReference>
<dbReference type="PIR" id="E64415">
    <property type="entry name" value="E64415"/>
</dbReference>
<dbReference type="RefSeq" id="WP_010870439.1">
    <property type="nucleotide sequence ID" value="NC_000909.1"/>
</dbReference>
<dbReference type="SMR" id="Q58335"/>
<dbReference type="FunCoup" id="Q58335">
    <property type="interactions" value="1"/>
</dbReference>
<dbReference type="PaxDb" id="243232-MJ_0925"/>
<dbReference type="EnsemblBacteria" id="AAB98937">
    <property type="protein sequence ID" value="AAB98937"/>
    <property type="gene ID" value="MJ_0925"/>
</dbReference>
<dbReference type="GeneID" id="1451814"/>
<dbReference type="KEGG" id="mja:MJ_0925"/>
<dbReference type="eggNOG" id="arCOG01057">
    <property type="taxonomic scope" value="Archaea"/>
</dbReference>
<dbReference type="HOGENOM" id="CLU_2217109_0_0_2"/>
<dbReference type="InParanoid" id="Q58335"/>
<dbReference type="OrthoDB" id="65466at2157"/>
<dbReference type="PhylomeDB" id="Q58335"/>
<dbReference type="Proteomes" id="UP000000805">
    <property type="component" value="Chromosome"/>
</dbReference>
<dbReference type="GO" id="GO:0032993">
    <property type="term" value="C:protein-DNA complex"/>
    <property type="evidence" value="ECO:0000318"/>
    <property type="project" value="GO_Central"/>
</dbReference>
<dbReference type="GO" id="GO:0003677">
    <property type="term" value="F:DNA binding"/>
    <property type="evidence" value="ECO:0007669"/>
    <property type="project" value="UniProtKB-KW"/>
</dbReference>
<dbReference type="GO" id="GO:0003700">
    <property type="term" value="F:DNA-binding transcription factor activity"/>
    <property type="evidence" value="ECO:0000318"/>
    <property type="project" value="GO_Central"/>
</dbReference>
<dbReference type="GO" id="GO:0006355">
    <property type="term" value="P:regulation of DNA-templated transcription"/>
    <property type="evidence" value="ECO:0000318"/>
    <property type="project" value="GO_Central"/>
</dbReference>
<dbReference type="Gene3D" id="1.10.10.10">
    <property type="entry name" value="Winged helix-like DNA-binding domain superfamily/Winged helix DNA-binding domain"/>
    <property type="match status" value="1"/>
</dbReference>
<dbReference type="InterPro" id="IPR002577">
    <property type="entry name" value="HTH_HxlR"/>
</dbReference>
<dbReference type="InterPro" id="IPR036388">
    <property type="entry name" value="WH-like_DNA-bd_sf"/>
</dbReference>
<dbReference type="InterPro" id="IPR036390">
    <property type="entry name" value="WH_DNA-bd_sf"/>
</dbReference>
<dbReference type="PANTHER" id="PTHR33204">
    <property type="entry name" value="TRANSCRIPTIONAL REGULATOR, MARR FAMILY"/>
    <property type="match status" value="1"/>
</dbReference>
<dbReference type="PANTHER" id="PTHR33204:SF18">
    <property type="entry name" value="TRANSCRIPTIONAL REGULATORY PROTEIN"/>
    <property type="match status" value="1"/>
</dbReference>
<dbReference type="Pfam" id="PF01638">
    <property type="entry name" value="HxlR"/>
    <property type="match status" value="1"/>
</dbReference>
<dbReference type="SUPFAM" id="SSF46785">
    <property type="entry name" value="Winged helix' DNA-binding domain"/>
    <property type="match status" value="1"/>
</dbReference>
<dbReference type="PROSITE" id="PS51118">
    <property type="entry name" value="HTH_HXLR"/>
    <property type="match status" value="1"/>
</dbReference>
<gene>
    <name type="ordered locus">MJ0925</name>
</gene>
<organism>
    <name type="scientific">Methanocaldococcus jannaschii (strain ATCC 43067 / DSM 2661 / JAL-1 / JCM 10045 / NBRC 100440)</name>
    <name type="common">Methanococcus jannaschii</name>
    <dbReference type="NCBI Taxonomy" id="243232"/>
    <lineage>
        <taxon>Archaea</taxon>
        <taxon>Methanobacteriati</taxon>
        <taxon>Methanobacteriota</taxon>
        <taxon>Methanomada group</taxon>
        <taxon>Methanococci</taxon>
        <taxon>Methanococcales</taxon>
        <taxon>Methanocaldococcaceae</taxon>
        <taxon>Methanocaldococcus</taxon>
    </lineage>
</organism>
<keyword id="KW-0238">DNA-binding</keyword>
<keyword id="KW-1185">Reference proteome</keyword>
<keyword id="KW-0804">Transcription</keyword>
<keyword id="KW-0805">Transcription regulation</keyword>
<evidence type="ECO:0000255" key="1">
    <source>
        <dbReference type="PROSITE-ProRule" id="PRU00435"/>
    </source>
</evidence>
<sequence>MSIFYVLGKKGTIEILYKIKEGVNSFTSIKNALDMEGCGVSTRTLAERLNELEDENLIQKDGSKYYLTKKGQEALEIIENVMKWEAKWKEAKIPKIIIGMLGDKER</sequence>
<feature type="chain" id="PRO_0000148893" description="Uncharacterized HTH-type transcriptional regulator MJ0925">
    <location>
        <begin position="1"/>
        <end position="106"/>
    </location>
</feature>
<feature type="domain" description="HTH hxlR-type" evidence="1">
    <location>
        <begin position="1"/>
        <end position="93"/>
    </location>
</feature>
<accession>Q58335</accession>
<name>Y925_METJA</name>
<proteinExistence type="predicted"/>
<protein>
    <recommendedName>
        <fullName>Uncharacterized HTH-type transcriptional regulator MJ0925</fullName>
    </recommendedName>
</protein>
<reference key="1">
    <citation type="journal article" date="1996" name="Science">
        <title>Complete genome sequence of the methanogenic archaeon, Methanococcus jannaschii.</title>
        <authorList>
            <person name="Bult C.J."/>
            <person name="White O."/>
            <person name="Olsen G.J."/>
            <person name="Zhou L."/>
            <person name="Fleischmann R.D."/>
            <person name="Sutton G.G."/>
            <person name="Blake J.A."/>
            <person name="FitzGerald L.M."/>
            <person name="Clayton R.A."/>
            <person name="Gocayne J.D."/>
            <person name="Kerlavage A.R."/>
            <person name="Dougherty B.A."/>
            <person name="Tomb J.-F."/>
            <person name="Adams M.D."/>
            <person name="Reich C.I."/>
            <person name="Overbeek R."/>
            <person name="Kirkness E.F."/>
            <person name="Weinstock K.G."/>
            <person name="Merrick J.M."/>
            <person name="Glodek A."/>
            <person name="Scott J.L."/>
            <person name="Geoghagen N.S.M."/>
            <person name="Weidman J.F."/>
            <person name="Fuhrmann J.L."/>
            <person name="Nguyen D."/>
            <person name="Utterback T.R."/>
            <person name="Kelley J.M."/>
            <person name="Peterson J.D."/>
            <person name="Sadow P.W."/>
            <person name="Hanna M.C."/>
            <person name="Cotton M.D."/>
            <person name="Roberts K.M."/>
            <person name="Hurst M.A."/>
            <person name="Kaine B.P."/>
            <person name="Borodovsky M."/>
            <person name="Klenk H.-P."/>
            <person name="Fraser C.M."/>
            <person name="Smith H.O."/>
            <person name="Woese C.R."/>
            <person name="Venter J.C."/>
        </authorList>
    </citation>
    <scope>NUCLEOTIDE SEQUENCE [LARGE SCALE GENOMIC DNA]</scope>
    <source>
        <strain>ATCC 43067 / DSM 2661 / JAL-1 / JCM 10045 / NBRC 100440</strain>
    </source>
</reference>